<proteinExistence type="evidence at protein level"/>
<organism>
    <name type="scientific">Rattus norvegicus</name>
    <name type="common">Rat</name>
    <dbReference type="NCBI Taxonomy" id="10116"/>
    <lineage>
        <taxon>Eukaryota</taxon>
        <taxon>Metazoa</taxon>
        <taxon>Chordata</taxon>
        <taxon>Craniata</taxon>
        <taxon>Vertebrata</taxon>
        <taxon>Euteleostomi</taxon>
        <taxon>Mammalia</taxon>
        <taxon>Eutheria</taxon>
        <taxon>Euarchontoglires</taxon>
        <taxon>Glires</taxon>
        <taxon>Rodentia</taxon>
        <taxon>Myomorpha</taxon>
        <taxon>Muroidea</taxon>
        <taxon>Muridae</taxon>
        <taxon>Murinae</taxon>
        <taxon>Rattus</taxon>
    </lineage>
</organism>
<evidence type="ECO:0000250" key="1"/>
<evidence type="ECO:0000250" key="2">
    <source>
        <dbReference type="UniProtKB" id="P19397"/>
    </source>
</evidence>
<evidence type="ECO:0000250" key="3">
    <source>
        <dbReference type="UniProtKB" id="Q61451"/>
    </source>
</evidence>
<evidence type="ECO:0000255" key="4"/>
<evidence type="ECO:0000305" key="5"/>
<sequence length="219" mass="24168">MGMSSLKLLKYVLFFFNFLFWVCGCCILGFGIHLLVQNTYGILFRNLPFLTLGNVLVIVGSIIMVVAFLGCMGSIKENKCLLMSFFVLLLLILLAEVTLAILLFVYEKKINTLVAEGLNDSIQHYHSDNSTRMAWDFIQSQLQCCGVNGSSDWISGPPSSCPSGADVQGCYKKGQAWFHSNFLYIGIVTICVCVIQVLGMSFALTLNCQIDKTSQALGL</sequence>
<accession>P24485</accession>
<feature type="initiator methionine" description="Removed">
    <location>
        <position position="1"/>
    </location>
</feature>
<feature type="chain" id="PRO_0000219214" description="Leukocyte surface antigen CD53">
    <location>
        <begin position="2"/>
        <end position="219"/>
    </location>
</feature>
<feature type="topological domain" description="Cytoplasmic" evidence="4">
    <location>
        <begin position="2"/>
        <end position="11"/>
    </location>
</feature>
<feature type="transmembrane region" description="Helical" evidence="4">
    <location>
        <begin position="12"/>
        <end position="32"/>
    </location>
</feature>
<feature type="topological domain" description="Extracellular" evidence="4">
    <location>
        <begin position="33"/>
        <end position="54"/>
    </location>
</feature>
<feature type="transmembrane region" description="Helical" evidence="4">
    <location>
        <begin position="55"/>
        <end position="69"/>
    </location>
</feature>
<feature type="topological domain" description="Cytoplasmic" evidence="4">
    <location>
        <begin position="70"/>
        <end position="80"/>
    </location>
</feature>
<feature type="transmembrane region" description="Helical" evidence="4">
    <location>
        <begin position="81"/>
        <end position="106"/>
    </location>
</feature>
<feature type="topological domain" description="Extracellular" evidence="4">
    <location>
        <begin position="107"/>
        <end position="181"/>
    </location>
</feature>
<feature type="transmembrane region" description="Helical" evidence="4">
    <location>
        <begin position="182"/>
        <end position="206"/>
    </location>
</feature>
<feature type="topological domain" description="Cytoplasmic" evidence="4">
    <location>
        <begin position="207"/>
        <end position="219"/>
    </location>
</feature>
<feature type="glycosylation site" description="N-linked (GlcNAc...) asparagine" evidence="4">
    <location>
        <position position="119"/>
    </location>
</feature>
<feature type="glycosylation site" description="N-linked (GlcNAc...) asparagine" evidence="4">
    <location>
        <position position="129"/>
    </location>
</feature>
<feature type="glycosylation site" description="N-linked (GlcNAc...) asparagine" evidence="4">
    <location>
        <position position="148"/>
    </location>
</feature>
<keyword id="KW-0965">Cell junction</keyword>
<keyword id="KW-1003">Cell membrane</keyword>
<keyword id="KW-0903">Direct protein sequencing</keyword>
<keyword id="KW-0325">Glycoprotein</keyword>
<keyword id="KW-0472">Membrane</keyword>
<keyword id="KW-1185">Reference proteome</keyword>
<keyword id="KW-0812">Transmembrane</keyword>
<keyword id="KW-1133">Transmembrane helix</keyword>
<comment type="function">
    <text evidence="1">Required for efficient formation of myofibers in regenerating muscle at the level of cell fusion. May be involved in growth regulation in hematopoietic cells (By similarity).</text>
</comment>
<comment type="subunit">
    <text evidence="2 3">Interacts with SCIMP. Interacts with CD45/PTPRC (By similarity). Interacts with IL7R (By similarity). Interacts with RBL2 and PPP2CA (By similarity).</text>
</comment>
<comment type="subcellular location">
    <subcellularLocation>
        <location evidence="1">Cell membrane</location>
    </subcellularLocation>
    <subcellularLocation>
        <location evidence="1">Cell junction</location>
    </subcellularLocation>
    <subcellularLocation>
        <location>Membrane</location>
        <topology>Multi-pass membrane protein</topology>
    </subcellularLocation>
    <text evidence="1">Concentrates in localized microdomains along the plasma membrane at the contact sites between cells of fused myotubes.</text>
</comment>
<comment type="tissue specificity">
    <text>Spleen and thymus, B-cells, monocytes, macrophages, neutrophils, single (CD4 or CD8) positive thymocytes, peripheral T-cells.</text>
</comment>
<comment type="similarity">
    <text evidence="5">Belongs to the tetraspanin (TM4SF) family.</text>
</comment>
<protein>
    <recommendedName>
        <fullName>Leukocyte surface antigen CD53</fullName>
    </recommendedName>
    <alternativeName>
        <fullName>Cell surface glycoprotein CD53</fullName>
    </alternativeName>
    <alternativeName>
        <fullName>Leukocyte antigen MRC OX-44</fullName>
    </alternativeName>
    <cdAntigenName>CD53</cdAntigenName>
</protein>
<dbReference type="EMBL" id="M57276">
    <property type="protein sequence ID" value="AAA41775.1"/>
    <property type="molecule type" value="mRNA"/>
</dbReference>
<dbReference type="EMBL" id="BC078900">
    <property type="protein sequence ID" value="AAH78900.1"/>
    <property type="molecule type" value="mRNA"/>
</dbReference>
<dbReference type="PIR" id="A39574">
    <property type="entry name" value="A39574"/>
</dbReference>
<dbReference type="RefSeq" id="NP_036655.1">
    <property type="nucleotide sequence ID" value="NM_012523.2"/>
</dbReference>
<dbReference type="SMR" id="P24485"/>
<dbReference type="FunCoup" id="P24485">
    <property type="interactions" value="300"/>
</dbReference>
<dbReference type="STRING" id="10116.ENSRNOP00000024344"/>
<dbReference type="GlyCosmos" id="P24485">
    <property type="glycosylation" value="3 sites, No reported glycans"/>
</dbReference>
<dbReference type="GlyGen" id="P24485">
    <property type="glycosylation" value="3 sites"/>
</dbReference>
<dbReference type="PhosphoSitePlus" id="P24485"/>
<dbReference type="PaxDb" id="10116-ENSRNOP00000024344"/>
<dbReference type="Ensembl" id="ENSRNOT00000024344.5">
    <property type="protein sequence ID" value="ENSRNOP00000024344.2"/>
    <property type="gene ID" value="ENSRNOG00000017874.5"/>
</dbReference>
<dbReference type="GeneID" id="24251"/>
<dbReference type="KEGG" id="rno:24251"/>
<dbReference type="UCSC" id="RGD:2310">
    <property type="organism name" value="rat"/>
</dbReference>
<dbReference type="AGR" id="RGD:2310"/>
<dbReference type="CTD" id="963"/>
<dbReference type="RGD" id="2310">
    <property type="gene designation" value="Cd53"/>
</dbReference>
<dbReference type="eggNOG" id="KOG3882">
    <property type="taxonomic scope" value="Eukaryota"/>
</dbReference>
<dbReference type="GeneTree" id="ENSGT00940000159669"/>
<dbReference type="HOGENOM" id="CLU_055524_4_3_1"/>
<dbReference type="InParanoid" id="P24485"/>
<dbReference type="OMA" id="IQSFLHC"/>
<dbReference type="OrthoDB" id="432835at2759"/>
<dbReference type="PhylomeDB" id="P24485"/>
<dbReference type="TreeFam" id="TF352892"/>
<dbReference type="Reactome" id="R-RNO-6798695">
    <property type="pathway name" value="Neutrophil degranulation"/>
</dbReference>
<dbReference type="PRO" id="PR:P24485"/>
<dbReference type="Proteomes" id="UP000002494">
    <property type="component" value="Chromosome 2"/>
</dbReference>
<dbReference type="Bgee" id="ENSRNOG00000017874">
    <property type="expression patterns" value="Expressed in spleen and 19 other cell types or tissues"/>
</dbReference>
<dbReference type="GO" id="GO:0009986">
    <property type="term" value="C:cell surface"/>
    <property type="evidence" value="ECO:0000314"/>
    <property type="project" value="RGD"/>
</dbReference>
<dbReference type="GO" id="GO:0005911">
    <property type="term" value="C:cell-cell junction"/>
    <property type="evidence" value="ECO:0000250"/>
    <property type="project" value="UniProtKB"/>
</dbReference>
<dbReference type="GO" id="GO:0001772">
    <property type="term" value="C:immunological synapse"/>
    <property type="evidence" value="ECO:0000266"/>
    <property type="project" value="RGD"/>
</dbReference>
<dbReference type="GO" id="GO:0005886">
    <property type="term" value="C:plasma membrane"/>
    <property type="evidence" value="ECO:0000250"/>
    <property type="project" value="UniProtKB"/>
</dbReference>
<dbReference type="GO" id="GO:0042802">
    <property type="term" value="F:identical protein binding"/>
    <property type="evidence" value="ECO:0000266"/>
    <property type="project" value="RGD"/>
</dbReference>
<dbReference type="GO" id="GO:0043495">
    <property type="term" value="F:protein-membrane adaptor activity"/>
    <property type="evidence" value="ECO:0000266"/>
    <property type="project" value="RGD"/>
</dbReference>
<dbReference type="GO" id="GO:1901741">
    <property type="term" value="P:positive regulation of myoblast fusion"/>
    <property type="evidence" value="ECO:0000250"/>
    <property type="project" value="UniProtKB"/>
</dbReference>
<dbReference type="GO" id="GO:0043113">
    <property type="term" value="P:receptor clustering"/>
    <property type="evidence" value="ECO:0000266"/>
    <property type="project" value="RGD"/>
</dbReference>
<dbReference type="GO" id="GO:0040008">
    <property type="term" value="P:regulation of growth"/>
    <property type="evidence" value="ECO:0000303"/>
    <property type="project" value="RGD"/>
</dbReference>
<dbReference type="CDD" id="cd03164">
    <property type="entry name" value="CD53_like_LEL"/>
    <property type="match status" value="1"/>
</dbReference>
<dbReference type="FunFam" id="1.10.1450.10:FF:000024">
    <property type="entry name" value="Tetraspanin"/>
    <property type="match status" value="1"/>
</dbReference>
<dbReference type="Gene3D" id="1.10.1450.10">
    <property type="entry name" value="Tetraspanin"/>
    <property type="match status" value="1"/>
</dbReference>
<dbReference type="InterPro" id="IPR018499">
    <property type="entry name" value="Tetraspanin/Peripherin"/>
</dbReference>
<dbReference type="InterPro" id="IPR000301">
    <property type="entry name" value="Tetraspanin_animals"/>
</dbReference>
<dbReference type="InterPro" id="IPR018503">
    <property type="entry name" value="Tetraspanin_CS"/>
</dbReference>
<dbReference type="InterPro" id="IPR008952">
    <property type="entry name" value="Tetraspanin_EC2_sf"/>
</dbReference>
<dbReference type="PANTHER" id="PTHR19282:SF39">
    <property type="entry name" value="LEUKOCYTE SURFACE ANTIGEN CD53"/>
    <property type="match status" value="1"/>
</dbReference>
<dbReference type="PANTHER" id="PTHR19282">
    <property type="entry name" value="TETRASPANIN"/>
    <property type="match status" value="1"/>
</dbReference>
<dbReference type="Pfam" id="PF00335">
    <property type="entry name" value="Tetraspanin"/>
    <property type="match status" value="1"/>
</dbReference>
<dbReference type="PIRSF" id="PIRSF002419">
    <property type="entry name" value="Tetraspanin"/>
    <property type="match status" value="1"/>
</dbReference>
<dbReference type="PRINTS" id="PR00259">
    <property type="entry name" value="TMFOUR"/>
</dbReference>
<dbReference type="SUPFAM" id="SSF48652">
    <property type="entry name" value="Tetraspanin"/>
    <property type="match status" value="1"/>
</dbReference>
<dbReference type="PROSITE" id="PS00421">
    <property type="entry name" value="TM4_1"/>
    <property type="match status" value="1"/>
</dbReference>
<name>CD53_RAT</name>
<gene>
    <name type="primary">Cd53</name>
    <name type="synonym">Ox-44</name>
</gene>
<reference key="1">
    <citation type="journal article" date="1991" name="Mol. Cell. Biol.">
        <title>The rat leukocyte antigen MRC OX-44 is a member of a new family of cell surface proteins which appear to be involved in growth regulation.</title>
        <authorList>
            <person name="Bellacosa A."/>
            <person name="Lazo P.A."/>
            <person name="Bear S.E."/>
            <person name="Tsichlis P.N."/>
        </authorList>
    </citation>
    <scope>NUCLEOTIDE SEQUENCE [MRNA]</scope>
</reference>
<reference key="2">
    <citation type="journal article" date="2004" name="Genome Res.">
        <title>The status, quality, and expansion of the NIH full-length cDNA project: the Mammalian Gene Collection (MGC).</title>
        <authorList>
            <consortium name="The MGC Project Team"/>
        </authorList>
    </citation>
    <scope>NUCLEOTIDE SEQUENCE [LARGE SCALE MRNA]</scope>
    <source>
        <tissue>Kidney</tissue>
    </source>
</reference>
<reference key="3">
    <citation type="journal article" date="1989" name="J. Exp. Med.">
        <title>The primary structure of the human leukocyte antigen CD37, a species homologue of the rat MRC OX-44 antigen.</title>
        <authorList>
            <person name="Classon B.J."/>
            <person name="Williams A.F."/>
            <person name="Willis A.C."/>
            <person name="Seed B."/>
            <person name="Stamenkovic I."/>
        </authorList>
    </citation>
    <scope>PRELIMINARY PROTEIN SEQUENCE OF 2-30</scope>
</reference>